<feature type="chain" id="PRO_1000200036" description="Putative manganese efflux pump MntP">
    <location>
        <begin position="1"/>
        <end position="189"/>
    </location>
</feature>
<feature type="transmembrane region" description="Helical" evidence="1">
    <location>
        <begin position="3"/>
        <end position="23"/>
    </location>
</feature>
<feature type="transmembrane region" description="Helical" evidence="1">
    <location>
        <begin position="41"/>
        <end position="61"/>
    </location>
</feature>
<feature type="transmembrane region" description="Helical" evidence="1">
    <location>
        <begin position="65"/>
        <end position="85"/>
    </location>
</feature>
<feature type="transmembrane region" description="Helical" evidence="1">
    <location>
        <begin position="106"/>
        <end position="128"/>
    </location>
</feature>
<feature type="transmembrane region" description="Helical" evidence="1">
    <location>
        <begin position="141"/>
        <end position="161"/>
    </location>
</feature>
<feature type="transmembrane region" description="Helical" evidence="1">
    <location>
        <begin position="168"/>
        <end position="188"/>
    </location>
</feature>
<accession>B7V6V8</accession>
<comment type="function">
    <text evidence="1">Probably functions as a manganese efflux pump.</text>
</comment>
<comment type="subcellular location">
    <subcellularLocation>
        <location evidence="1">Cell inner membrane</location>
        <topology evidence="1">Multi-pass membrane protein</topology>
    </subcellularLocation>
</comment>
<comment type="similarity">
    <text evidence="1">Belongs to the MntP (TC 9.B.29) family.</text>
</comment>
<dbReference type="EMBL" id="FM209186">
    <property type="protein sequence ID" value="CAW26881.1"/>
    <property type="molecule type" value="Genomic_DNA"/>
</dbReference>
<dbReference type="RefSeq" id="WP_003122506.1">
    <property type="nucleotide sequence ID" value="NC_011770.1"/>
</dbReference>
<dbReference type="KEGG" id="pag:PLES_21541"/>
<dbReference type="HOGENOM" id="CLU_096410_0_0_6"/>
<dbReference type="GO" id="GO:0005886">
    <property type="term" value="C:plasma membrane"/>
    <property type="evidence" value="ECO:0007669"/>
    <property type="project" value="UniProtKB-SubCell"/>
</dbReference>
<dbReference type="GO" id="GO:0005384">
    <property type="term" value="F:manganese ion transmembrane transporter activity"/>
    <property type="evidence" value="ECO:0007669"/>
    <property type="project" value="UniProtKB-UniRule"/>
</dbReference>
<dbReference type="HAMAP" id="MF_01521">
    <property type="entry name" value="MntP_pump"/>
    <property type="match status" value="1"/>
</dbReference>
<dbReference type="InterPro" id="IPR003810">
    <property type="entry name" value="Mntp/YtaF"/>
</dbReference>
<dbReference type="InterPro" id="IPR022929">
    <property type="entry name" value="Put_MntP"/>
</dbReference>
<dbReference type="NCBIfam" id="NF008546">
    <property type="entry name" value="PRK11469.1"/>
    <property type="match status" value="1"/>
</dbReference>
<dbReference type="PANTHER" id="PTHR35529">
    <property type="entry name" value="MANGANESE EFFLUX PUMP MNTP-RELATED"/>
    <property type="match status" value="1"/>
</dbReference>
<dbReference type="PANTHER" id="PTHR35529:SF1">
    <property type="entry name" value="MANGANESE EFFLUX PUMP MNTP-RELATED"/>
    <property type="match status" value="1"/>
</dbReference>
<dbReference type="Pfam" id="PF02659">
    <property type="entry name" value="Mntp"/>
    <property type="match status" value="1"/>
</dbReference>
<name>MNTP_PSEA8</name>
<sequence>MNPVSLIFLAFAMSTDAFAAAIGKGSSLDRPRLSEALRTGIIFGVIEAITPLVGWLLGQAASQFVADWDHWIAFVLLVLLGLHMIHNGLRADHETEQEKPGQHSFWILAVTALATSIDALAVGVGLAFVDVNIFLAAGAIGLATMTMVTLGTMLGRALGAVTGKRAEMVGGVVLILVGATILYEHLSAA</sequence>
<organism>
    <name type="scientific">Pseudomonas aeruginosa (strain LESB58)</name>
    <dbReference type="NCBI Taxonomy" id="557722"/>
    <lineage>
        <taxon>Bacteria</taxon>
        <taxon>Pseudomonadati</taxon>
        <taxon>Pseudomonadota</taxon>
        <taxon>Gammaproteobacteria</taxon>
        <taxon>Pseudomonadales</taxon>
        <taxon>Pseudomonadaceae</taxon>
        <taxon>Pseudomonas</taxon>
    </lineage>
</organism>
<gene>
    <name evidence="1" type="primary">mntP</name>
    <name type="ordered locus">PLES_21541</name>
</gene>
<reference key="1">
    <citation type="journal article" date="2009" name="Genome Res.">
        <title>Newly introduced genomic prophage islands are critical determinants of in vivo competitiveness in the Liverpool epidemic strain of Pseudomonas aeruginosa.</title>
        <authorList>
            <person name="Winstanley C."/>
            <person name="Langille M.G.I."/>
            <person name="Fothergill J.L."/>
            <person name="Kukavica-Ibrulj I."/>
            <person name="Paradis-Bleau C."/>
            <person name="Sanschagrin F."/>
            <person name="Thomson N.R."/>
            <person name="Winsor G.L."/>
            <person name="Quail M.A."/>
            <person name="Lennard N."/>
            <person name="Bignell A."/>
            <person name="Clarke L."/>
            <person name="Seeger K."/>
            <person name="Saunders D."/>
            <person name="Harris D."/>
            <person name="Parkhill J."/>
            <person name="Hancock R.E.W."/>
            <person name="Brinkman F.S.L."/>
            <person name="Levesque R.C."/>
        </authorList>
    </citation>
    <scope>NUCLEOTIDE SEQUENCE [LARGE SCALE GENOMIC DNA]</scope>
    <source>
        <strain>LESB58</strain>
    </source>
</reference>
<protein>
    <recommendedName>
        <fullName evidence="1">Putative manganese efflux pump MntP</fullName>
    </recommendedName>
</protein>
<evidence type="ECO:0000255" key="1">
    <source>
        <dbReference type="HAMAP-Rule" id="MF_01521"/>
    </source>
</evidence>
<keyword id="KW-0997">Cell inner membrane</keyword>
<keyword id="KW-1003">Cell membrane</keyword>
<keyword id="KW-0406">Ion transport</keyword>
<keyword id="KW-0464">Manganese</keyword>
<keyword id="KW-0472">Membrane</keyword>
<keyword id="KW-0812">Transmembrane</keyword>
<keyword id="KW-1133">Transmembrane helix</keyword>
<keyword id="KW-0813">Transport</keyword>
<proteinExistence type="inferred from homology"/>